<feature type="signal peptide" evidence="4">
    <location>
        <begin position="1"/>
        <end position="32"/>
    </location>
</feature>
<feature type="chain" id="PRO_0000391719" description="Adhesion G-protein coupled receptor G6">
    <location>
        <begin position="33"/>
        <end position="1185"/>
    </location>
</feature>
<feature type="chain" id="PRO_0000438600" description="Adhesion G-protein coupled receptor G6, N-terminal fragment" evidence="1">
    <location>
        <begin position="33"/>
        <end position="827"/>
    </location>
</feature>
<feature type="chain" id="PRO_0000438601" description="Adhesion G-protein coupled receptor G6, C-terminal fragment" evidence="1">
    <location>
        <begin position="828"/>
        <end position="1185"/>
    </location>
</feature>
<feature type="topological domain" description="Extracellular" evidence="4">
    <location>
        <begin position="33"/>
        <end position="849"/>
    </location>
</feature>
<feature type="transmembrane region" description="Helical; Name=1" evidence="4">
    <location>
        <begin position="850"/>
        <end position="870"/>
    </location>
</feature>
<feature type="topological domain" description="Cytoplasmic" evidence="4">
    <location>
        <begin position="871"/>
        <end position="886"/>
    </location>
</feature>
<feature type="transmembrane region" description="Helical; Name=2" evidence="4">
    <location>
        <begin position="887"/>
        <end position="907"/>
    </location>
</feature>
<feature type="topological domain" description="Extracellular" evidence="4">
    <location>
        <begin position="908"/>
        <end position="915"/>
    </location>
</feature>
<feature type="transmembrane region" description="Helical; Name=3" evidence="4">
    <location>
        <begin position="916"/>
        <end position="936"/>
    </location>
</feature>
<feature type="topological domain" description="Cytoplasmic" evidence="4">
    <location>
        <begin position="937"/>
        <end position="957"/>
    </location>
</feature>
<feature type="transmembrane region" description="Helical; Name=4" evidence="4">
    <location>
        <begin position="958"/>
        <end position="978"/>
    </location>
</feature>
<feature type="topological domain" description="Extracellular" evidence="4">
    <location>
        <begin position="979"/>
        <end position="1013"/>
    </location>
</feature>
<feature type="transmembrane region" description="Helical; Name=5" evidence="4">
    <location>
        <begin position="1014"/>
        <end position="1034"/>
    </location>
</feature>
<feature type="topological domain" description="Cytoplasmic" evidence="4">
    <location>
        <begin position="1035"/>
        <end position="1057"/>
    </location>
</feature>
<feature type="transmembrane region" description="Helical; Name=6" evidence="4">
    <location>
        <begin position="1058"/>
        <end position="1080"/>
    </location>
</feature>
<feature type="topological domain" description="Extracellular" evidence="4">
    <location>
        <begin position="1081"/>
        <end position="1083"/>
    </location>
</feature>
<feature type="transmembrane region" description="Helical; Name=7" evidence="4">
    <location>
        <begin position="1084"/>
        <end position="1106"/>
    </location>
</feature>
<feature type="topological domain" description="Cytoplasmic" evidence="4">
    <location>
        <begin position="1107"/>
        <end position="1185"/>
    </location>
</feature>
<feature type="domain" description="CUB" evidence="5">
    <location>
        <begin position="41"/>
        <end position="149"/>
    </location>
</feature>
<feature type="domain" description="Pentraxin (PTX)" evidence="7">
    <location>
        <begin position="154"/>
        <end position="355"/>
    </location>
</feature>
<feature type="domain" description="GAIN-B" evidence="6">
    <location>
        <begin position="658"/>
        <end position="840"/>
    </location>
</feature>
<feature type="region of interest" description="Inhibits receptor signaling in absence of type IV collagen" evidence="13">
    <location>
        <begin position="41"/>
        <end position="839"/>
    </location>
</feature>
<feature type="region of interest" description="Mediates interaction with type IV collagen" evidence="13">
    <location>
        <begin position="41"/>
        <end position="354"/>
    </location>
</feature>
<feature type="region of interest" description="GPS" evidence="6">
    <location>
        <begin position="790"/>
        <end position="840"/>
    </location>
</feature>
<feature type="region of interest" description="Stachel" evidence="2">
    <location>
        <begin position="829"/>
        <end position="837"/>
    </location>
</feature>
<feature type="region of interest" description="Disordered" evidence="8">
    <location>
        <begin position="1138"/>
        <end position="1160"/>
    </location>
</feature>
<feature type="compositionally biased region" description="Low complexity" evidence="8">
    <location>
        <begin position="1144"/>
        <end position="1158"/>
    </location>
</feature>
<feature type="binding site" evidence="16 20">
    <location>
        <position position="89"/>
    </location>
    <ligand>
        <name>Ca(2+)</name>
        <dbReference type="ChEBI" id="CHEBI:29108"/>
    </ligand>
</feature>
<feature type="binding site" evidence="16 20">
    <location>
        <position position="97"/>
    </location>
    <ligand>
        <name>Ca(2+)</name>
        <dbReference type="ChEBI" id="CHEBI:29108"/>
    </ligand>
</feature>
<feature type="binding site" evidence="16 20">
    <location>
        <position position="134"/>
    </location>
    <ligand>
        <name>Ca(2+)</name>
        <dbReference type="ChEBI" id="CHEBI:29108"/>
    </ligand>
</feature>
<feature type="binding site" evidence="16 20">
    <location>
        <position position="136"/>
    </location>
    <ligand>
        <name>Ca(2+)</name>
        <dbReference type="ChEBI" id="CHEBI:29108"/>
    </ligand>
</feature>
<feature type="binding site" evidence="16 20">
    <location>
        <position position="137"/>
    </location>
    <ligand>
        <name>Ca(2+)</name>
        <dbReference type="ChEBI" id="CHEBI:29108"/>
    </ligand>
</feature>
<feature type="binding site" evidence="2">
    <location>
        <position position="1092"/>
    </location>
    <ligand>
        <name>17alpha-hydroxyprogesterone</name>
        <dbReference type="ChEBI" id="CHEBI:17252"/>
    </ligand>
</feature>
<feature type="site" description="Cleavage; by autolysis" evidence="6">
    <location>
        <begin position="827"/>
        <end position="828"/>
    </location>
</feature>
<feature type="glycosylation site" description="N-linked (GlcNAc...) asparagine" evidence="16 20">
    <location>
        <position position="68"/>
    </location>
</feature>
<feature type="glycosylation site" description="N-linked (GlcNAc...) asparagine" evidence="16 20">
    <location>
        <position position="121"/>
    </location>
</feature>
<feature type="glycosylation site" description="N-linked (GlcNAc...) asparagine" evidence="4">
    <location>
        <position position="395"/>
    </location>
</feature>
<feature type="glycosylation site" description="N-linked (GlcNAc...) asparagine" evidence="16 20">
    <location>
        <position position="429"/>
    </location>
</feature>
<feature type="glycosylation site" description="N-linked (GlcNAc...) asparagine" evidence="4">
    <location>
        <position position="470"/>
    </location>
</feature>
<feature type="glycosylation site" description="N-linked (GlcNAc...) asparagine" evidence="16 20">
    <location>
        <position position="539"/>
    </location>
</feature>
<feature type="glycosylation site" description="N-linked (GlcNAc...) asparagine" evidence="16 20">
    <location>
        <position position="550"/>
    </location>
</feature>
<feature type="glycosylation site" description="N-linked (GlcNAc...) asparagine" evidence="16 20">
    <location>
        <position position="562"/>
    </location>
</feature>
<feature type="glycosylation site" description="N-linked (GlcNAc...) asparagine" evidence="16 20">
    <location>
        <position position="565"/>
    </location>
</feature>
<feature type="glycosylation site" description="N-linked (GlcNAc...) asparagine" evidence="16 20">
    <location>
        <position position="613"/>
    </location>
</feature>
<feature type="glycosylation site" description="N-linked (GlcNAc...) asparagine" evidence="4">
    <location>
        <position position="680"/>
    </location>
</feature>
<feature type="glycosylation site" description="N-linked (GlcNAc...) asparagine" evidence="4">
    <location>
        <position position="691"/>
    </location>
</feature>
<feature type="glycosylation site" description="N-linked (GlcNAc...) asparagine" evidence="16 20">
    <location>
        <position position="719"/>
    </location>
</feature>
<feature type="glycosylation site" description="N-linked (GlcNAc...) asparagine" evidence="16 20">
    <location>
        <position position="763"/>
    </location>
</feature>
<feature type="glycosylation site" description="N-linked (GlcNAc...) asparagine" evidence="4">
    <location>
        <position position="799"/>
    </location>
</feature>
<feature type="glycosylation site" description="N-linked (GlcNAc...) asparagine" evidence="16 20">
    <location>
        <position position="818"/>
    </location>
</feature>
<feature type="disulfide bond" evidence="5 16 20">
    <location>
        <begin position="41"/>
        <end position="67"/>
    </location>
</feature>
<feature type="disulfide bond" evidence="5 20">
    <location>
        <begin position="94"/>
        <end position="111"/>
    </location>
</feature>
<feature type="disulfide bond" evidence="7">
    <location>
        <begin position="185"/>
        <end position="248"/>
    </location>
</feature>
<feature type="disulfide bond" evidence="16 20">
    <location>
        <begin position="229"/>
        <end position="271"/>
    </location>
</feature>
<feature type="disulfide bond" evidence="16 20">
    <location>
        <begin position="369"/>
        <end position="375"/>
    </location>
</feature>
<feature type="disulfide bond" evidence="16 20">
    <location>
        <begin position="508"/>
        <end position="544"/>
    </location>
</feature>
<feature type="disulfide bond" evidence="16 20">
    <location>
        <begin position="532"/>
        <end position="563"/>
    </location>
</feature>
<feature type="disulfide bond" evidence="6 16 20">
    <location>
        <begin position="790"/>
        <end position="822"/>
    </location>
</feature>
<feature type="disulfide bond" evidence="6 16 20">
    <location>
        <begin position="809"/>
        <end position="824"/>
    </location>
</feature>
<feature type="mutagenesis site" description="Knockin fishes display impaired myelination of the peripheral nervous system." evidence="16">
    <original>DF</original>
    <variation>AA</variation>
    <location>
        <begin position="134"/>
        <end position="135"/>
    </location>
</feature>
<feature type="mutagenesis site" description="In stl215; mutants develop swollen ears, fail to express mbp and do not myelinate peripheral axons." evidence="14">
    <location>
        <begin position="831"/>
        <end position="832"/>
    </location>
</feature>
<feature type="mutagenesis site" description="In lau; allele tb233c; semicircular canal defects." evidence="11">
    <original>I</original>
    <variation>N</variation>
    <location>
        <position position="963"/>
    </location>
</feature>
<feature type="mutagenesis site" description="In lau; allele tk256a; semicircular canal defects." evidence="11">
    <original>P</original>
    <variation>L</variation>
    <location>
        <position position="969"/>
    </location>
</feature>
<keyword id="KW-0002">3D-structure</keyword>
<keyword id="KW-1003">Cell membrane</keyword>
<keyword id="KW-1015">Disulfide bond</keyword>
<keyword id="KW-0297">G-protein coupled receptor</keyword>
<keyword id="KW-0325">Glycoprotein</keyword>
<keyword id="KW-0472">Membrane</keyword>
<keyword id="KW-0675">Receptor</keyword>
<keyword id="KW-1185">Reference proteome</keyword>
<keyword id="KW-0732">Signal</keyword>
<keyword id="KW-0807">Transducer</keyword>
<keyword id="KW-0812">Transmembrane</keyword>
<keyword id="KW-1133">Transmembrane helix</keyword>
<reference key="1">
    <citation type="journal article" date="2009" name="Science">
        <title>A G protein-coupled receptor is essential for Schwann cells to initiate myelination.</title>
        <authorList>
            <person name="Monk K.R."/>
            <person name="Naylor S.G."/>
            <person name="Glenn T.D."/>
            <person name="Mercurio S."/>
            <person name="Perlin J.R."/>
            <person name="Dominguez C."/>
            <person name="Moens C.B."/>
            <person name="Talbot W.S."/>
        </authorList>
    </citation>
    <scope>NUCLEOTIDE SEQUENCE [MRNA]</scope>
    <scope>FUNCTION</scope>
    <scope>DEVELOPMENTAL STAGE</scope>
    <scope>TISSUE SPECIFICITY</scope>
</reference>
<reference key="2">
    <citation type="journal article" date="2013" name="Development">
        <title>Semicircular canal morphogenesis in the zebrafish inner ear requires the function of gpr126 (lauscher), an adhesion class G protein-coupled receptor gene.</title>
        <authorList>
            <person name="Geng F.S."/>
            <person name="Abbas L."/>
            <person name="Baxendale S."/>
            <person name="Holdsworth C.J."/>
            <person name="Swanson A.G."/>
            <person name="Slanchev K."/>
            <person name="Hammerschmidt M."/>
            <person name="Topczewski J."/>
            <person name="Whitfield T.T."/>
        </authorList>
    </citation>
    <scope>FUNCTION</scope>
    <scope>DISRUPTION PHENOTYPE</scope>
    <scope>MUTAGENESIS OF ILE-963 AND PRO-969</scope>
</reference>
<reference key="3">
    <citation type="journal article" date="2013" name="Development">
        <title>Analysis of Gpr126 function defines distinct mechanisms controlling the initiation and maturation of myelin.</title>
        <authorList>
            <person name="Glenn T.D."/>
            <person name="Talbot W.S."/>
        </authorList>
    </citation>
    <scope>FUNCTION</scope>
</reference>
<reference key="4">
    <citation type="journal article" date="2013" name="Proc. Natl. Acad. Sci. U.S.A.">
        <title>Organ-specific function of adhesion G protein-coupled receptor GPR126 is domain-dependent.</title>
        <authorList>
            <person name="Patra C."/>
            <person name="van Amerongen M.J."/>
            <person name="Ghosh S."/>
            <person name="Ricciardi F."/>
            <person name="Sajjad A."/>
            <person name="Novoyatleva T."/>
            <person name="Mogha A."/>
            <person name="Monk K.R."/>
            <person name="Muehlfeld C."/>
            <person name="Engel F.B."/>
        </authorList>
    </citation>
    <scope>DISRUPTION PHENOTYPE</scope>
    <scope>FUNCTION</scope>
</reference>
<reference key="5">
    <citation type="journal article" date="2014" name="Cell Rep.">
        <title>A tethered agonist within the ectodomain activates the adhesion G protein-coupled receptors GPR126 and GPR133.</title>
        <authorList>
            <person name="Liebscher I."/>
            <person name="Schoen J."/>
            <person name="Petersen S.C."/>
            <person name="Fischer L."/>
            <person name="Auerbach N."/>
            <person name="Demberg L.M."/>
            <person name="Mogha A."/>
            <person name="Coester M."/>
            <person name="Simon K.U."/>
            <person name="Rothemund S."/>
            <person name="Monk K.R."/>
            <person name="Schoeneberg T."/>
        </authorList>
    </citation>
    <scope>FUNCTION</scope>
    <scope>MUTAGENESIS OF 831-GLY-ILE-832</scope>
</reference>
<reference key="6">
    <citation type="journal article" date="2014" name="J. Biol. Chem.">
        <title>GPR126 protein regulates developmental and pathological angiogenesis through modulation of VEGFR2 receptor signaling.</title>
        <authorList>
            <person name="Cui H."/>
            <person name="Wang Y."/>
            <person name="Huang H."/>
            <person name="Yu W."/>
            <person name="Bai M."/>
            <person name="Zhang L."/>
            <person name="Bryan B.A."/>
            <person name="Wang Y."/>
            <person name="Luo J."/>
            <person name="Li D."/>
            <person name="Ma Y."/>
            <person name="Liu M."/>
        </authorList>
    </citation>
    <scope>FUNCTION</scope>
</reference>
<reference key="7">
    <citation type="journal article" date="2014" name="Sci. Signal.">
        <title>Type IV collagen is an activating ligand for the adhesion G protein-coupled receptor GPR126.</title>
        <authorList>
            <person name="Paavola K.J."/>
            <person name="Sidik H."/>
            <person name="Zuchero J.B."/>
            <person name="Eckart M."/>
            <person name="Talbot W.S."/>
        </authorList>
    </citation>
    <scope>FUNCTION</scope>
    <scope>SUBCELLULAR LOCATION</scope>
    <scope>REGION</scope>
</reference>
<reference key="8">
    <citation type="journal article" date="2015" name="Neuron">
        <title>The adhesion GPCR GPR126 has distinct, domain-dependent functions in Schwann cell development mediated by interaction with laminin-211.</title>
        <authorList>
            <person name="Petersen S.C."/>
            <person name="Luo R."/>
            <person name="Liebscher I."/>
            <person name="Giera S."/>
            <person name="Jeong S.J."/>
            <person name="Mogha A."/>
            <person name="Ghidinelli M."/>
            <person name="Feltri M.L."/>
            <person name="Schoeneberg T."/>
            <person name="Piao X."/>
            <person name="Monk K.R."/>
        </authorList>
    </citation>
    <scope>FUNCTION</scope>
</reference>
<reference key="9">
    <citation type="journal article" date="2021" name="Sci. Adv.">
        <title>Adhesion G protein-coupled receptor Gpr126/Adgrg6 is essential for placental development.</title>
        <authorList>
            <person name="Torregrosa-Carrion R."/>
            <person name="Pineiro-Sabaris R."/>
            <person name="Siguero-Alvarez M."/>
            <person name="Grego-Bessa J."/>
            <person name="Luna-Zurita L."/>
            <person name="Fernandes V.S."/>
            <person name="MacGrogan D."/>
            <person name="Stainier D.Y.R."/>
            <person name="de la Pompa J.L."/>
        </authorList>
    </citation>
    <scope>DISRUPTION PHENOTYPE</scope>
</reference>
<reference evidence="20" key="10">
    <citation type="journal article" date="2020" name="Nat. Commun.">
        <title>Structural basis for adhesion G protein-coupled receptor Gpr126 function.</title>
        <authorList>
            <person name="Leon K."/>
            <person name="Cunningham R.L."/>
            <person name="Riback J.A."/>
            <person name="Feldman E."/>
            <person name="Li J."/>
            <person name="Sosnick T.R."/>
            <person name="Zhao M."/>
            <person name="Monk K.R."/>
            <person name="Arac D."/>
        </authorList>
    </citation>
    <scope>X-RAY CRYSTALLOGRAPHY (2.38 ANGSTROMS) OF 37-839 IN COMPLEX WITH CA(2+)</scope>
    <scope>GLYCOSYLATION AT ASN-68; ASN-121; ASN-429; ASN-539; ASN-550; ASN-562; ASN-565; ASN-613; ASN-719; ASN-763 AND ASN-818</scope>
    <scope>FUNCTION</scope>
    <scope>DISULFIDE BONDS</scope>
    <scope>MUTAGENESIS OF 134-ASP-PHE-135</scope>
</reference>
<name>AGRG6_DANRE</name>
<dbReference type="EMBL" id="GQ202546">
    <property type="protein sequence ID" value="ACS94979.1"/>
    <property type="molecule type" value="mRNA"/>
</dbReference>
<dbReference type="RefSeq" id="NP_001156763.1">
    <property type="nucleotide sequence ID" value="NM_001163291.2"/>
</dbReference>
<dbReference type="PDB" id="6V55">
    <property type="method" value="X-ray"/>
    <property type="resolution" value="2.36 A"/>
    <property type="chains" value="A=37-839"/>
</dbReference>
<dbReference type="PDBsum" id="6V55"/>
<dbReference type="SASBDB" id="C6KFA3"/>
<dbReference type="SMR" id="C6KFA3"/>
<dbReference type="FunCoup" id="C6KFA3">
    <property type="interactions" value="782"/>
</dbReference>
<dbReference type="STRING" id="7955.ENSDARP00000115692"/>
<dbReference type="GlyCosmos" id="C6KFA3">
    <property type="glycosylation" value="16 sites, No reported glycans"/>
</dbReference>
<dbReference type="PaxDb" id="7955-ENSDARP00000109070"/>
<dbReference type="GeneID" id="561970"/>
<dbReference type="KEGG" id="dre:561970"/>
<dbReference type="AGR" id="ZFIN:ZDB-GENE-041014-357"/>
<dbReference type="CTD" id="57211"/>
<dbReference type="ZFIN" id="ZDB-GENE-041014-357">
    <property type="gene designation" value="adgrg6"/>
</dbReference>
<dbReference type="eggNOG" id="KOG4193">
    <property type="taxonomic scope" value="Eukaryota"/>
</dbReference>
<dbReference type="InParanoid" id="C6KFA3"/>
<dbReference type="OrthoDB" id="10037534at2759"/>
<dbReference type="Reactome" id="R-DRE-9619665">
    <property type="pathway name" value="EGR2 and SOX10-mediated initiation of Schwann cell myelination"/>
</dbReference>
<dbReference type="PRO" id="PR:C6KFA3"/>
<dbReference type="Proteomes" id="UP000000437">
    <property type="component" value="Chromosome 20"/>
</dbReference>
<dbReference type="GO" id="GO:0005886">
    <property type="term" value="C:plasma membrane"/>
    <property type="evidence" value="ECO:0000318"/>
    <property type="project" value="GO_Central"/>
</dbReference>
<dbReference type="GO" id="GO:0005518">
    <property type="term" value="F:collagen binding"/>
    <property type="evidence" value="ECO:0000314"/>
    <property type="project" value="UniProtKB"/>
</dbReference>
<dbReference type="GO" id="GO:0050840">
    <property type="term" value="F:extracellular matrix binding"/>
    <property type="evidence" value="ECO:0000314"/>
    <property type="project" value="UniProtKB"/>
</dbReference>
<dbReference type="GO" id="GO:0004930">
    <property type="term" value="F:G protein-coupled receptor activity"/>
    <property type="evidence" value="ECO:0000314"/>
    <property type="project" value="UniProtKB"/>
</dbReference>
<dbReference type="GO" id="GO:0043236">
    <property type="term" value="F:laminin binding"/>
    <property type="evidence" value="ECO:0000250"/>
    <property type="project" value="UniProtKB"/>
</dbReference>
<dbReference type="GO" id="GO:0007189">
    <property type="term" value="P:adenylate cyclase-activating G protein-coupled receptor signaling pathway"/>
    <property type="evidence" value="ECO:0000318"/>
    <property type="project" value="GO_Central"/>
</dbReference>
<dbReference type="GO" id="GO:0007193">
    <property type="term" value="P:adenylate cyclase-inhibiting G protein-coupled receptor signaling pathway"/>
    <property type="evidence" value="ECO:0000250"/>
    <property type="project" value="UniProtKB"/>
</dbReference>
<dbReference type="GO" id="GO:0007188">
    <property type="term" value="P:adenylate cyclase-modulating G protein-coupled receptor signaling pathway"/>
    <property type="evidence" value="ECO:0000314"/>
    <property type="project" value="UniProtKB"/>
</dbReference>
<dbReference type="GO" id="GO:0051216">
    <property type="term" value="P:cartilage development"/>
    <property type="evidence" value="ECO:0000250"/>
    <property type="project" value="UniProtKB"/>
</dbReference>
<dbReference type="GO" id="GO:0007166">
    <property type="term" value="P:cell surface receptor signaling pathway"/>
    <property type="evidence" value="ECO:0000314"/>
    <property type="project" value="UniProtKB"/>
</dbReference>
<dbReference type="GO" id="GO:0043583">
    <property type="term" value="P:ear development"/>
    <property type="evidence" value="ECO:0000314"/>
    <property type="project" value="UniProtKB"/>
</dbReference>
<dbReference type="GO" id="GO:0007507">
    <property type="term" value="P:heart development"/>
    <property type="evidence" value="ECO:0000314"/>
    <property type="project" value="UniProtKB"/>
</dbReference>
<dbReference type="GO" id="GO:0060347">
    <property type="term" value="P:heart trabecula formation"/>
    <property type="evidence" value="ECO:0000315"/>
    <property type="project" value="ZFIN"/>
</dbReference>
<dbReference type="GO" id="GO:0007005">
    <property type="term" value="P:mitochondrion organization"/>
    <property type="evidence" value="ECO:0000315"/>
    <property type="project" value="ZFIN"/>
</dbReference>
<dbReference type="GO" id="GO:0042552">
    <property type="term" value="P:myelination"/>
    <property type="evidence" value="ECO:0000314"/>
    <property type="project" value="UniProtKB"/>
</dbReference>
<dbReference type="GO" id="GO:0022011">
    <property type="term" value="P:myelination in peripheral nervous system"/>
    <property type="evidence" value="ECO:0000315"/>
    <property type="project" value="UniProtKB"/>
</dbReference>
<dbReference type="GO" id="GO:0048932">
    <property type="term" value="P:myelination of posterior lateral line nerve axons"/>
    <property type="evidence" value="ECO:0000315"/>
    <property type="project" value="ZFIN"/>
</dbReference>
<dbReference type="GO" id="GO:0001503">
    <property type="term" value="P:ossification"/>
    <property type="evidence" value="ECO:0000315"/>
    <property type="project" value="ZFIN"/>
</dbReference>
<dbReference type="GO" id="GO:0032290">
    <property type="term" value="P:peripheral nervous system myelin formation"/>
    <property type="evidence" value="ECO:0000315"/>
    <property type="project" value="ZFIN"/>
</dbReference>
<dbReference type="GO" id="GO:0030500">
    <property type="term" value="P:regulation of bone mineralization"/>
    <property type="evidence" value="ECO:0000250"/>
    <property type="project" value="UniProtKB"/>
</dbReference>
<dbReference type="GO" id="GO:1903670">
    <property type="term" value="P:regulation of sprouting angiogenesis"/>
    <property type="evidence" value="ECO:0000315"/>
    <property type="project" value="ZFIN"/>
</dbReference>
<dbReference type="GO" id="GO:0014037">
    <property type="term" value="P:Schwann cell differentiation"/>
    <property type="evidence" value="ECO:0000250"/>
    <property type="project" value="UniProtKB"/>
</dbReference>
<dbReference type="GO" id="GO:0060879">
    <property type="term" value="P:semicircular canal fusion"/>
    <property type="evidence" value="ECO:0000315"/>
    <property type="project" value="ZFIN"/>
</dbReference>
<dbReference type="CDD" id="cd15996">
    <property type="entry name" value="7tmB2_GPR126"/>
    <property type="match status" value="1"/>
</dbReference>
<dbReference type="CDD" id="cd00041">
    <property type="entry name" value="CUB"/>
    <property type="match status" value="1"/>
</dbReference>
<dbReference type="FunFam" id="1.20.1070.10:FF:000052">
    <property type="entry name" value="Adhesion G-protein coupled receptor G6"/>
    <property type="match status" value="1"/>
</dbReference>
<dbReference type="FunFam" id="2.60.120.290:FF:000013">
    <property type="entry name" value="Membrane frizzled-related protein"/>
    <property type="match status" value="1"/>
</dbReference>
<dbReference type="Gene3D" id="2.60.120.200">
    <property type="match status" value="1"/>
</dbReference>
<dbReference type="Gene3D" id="2.60.220.50">
    <property type="match status" value="1"/>
</dbReference>
<dbReference type="Gene3D" id="1.20.1070.10">
    <property type="entry name" value="Rhodopsin 7-helix transmembrane proteins"/>
    <property type="match status" value="1"/>
</dbReference>
<dbReference type="Gene3D" id="2.60.120.290">
    <property type="entry name" value="Spermadhesin, CUB domain"/>
    <property type="match status" value="1"/>
</dbReference>
<dbReference type="InterPro" id="IPR013320">
    <property type="entry name" value="ConA-like_dom_sf"/>
</dbReference>
<dbReference type="InterPro" id="IPR000859">
    <property type="entry name" value="CUB_dom"/>
</dbReference>
<dbReference type="InterPro" id="IPR057244">
    <property type="entry name" value="GAIN_B"/>
</dbReference>
<dbReference type="InterPro" id="IPR046338">
    <property type="entry name" value="GAIN_dom_sf"/>
</dbReference>
<dbReference type="InterPro" id="IPR017981">
    <property type="entry name" value="GPCR_2-like_7TM"/>
</dbReference>
<dbReference type="InterPro" id="IPR000832">
    <property type="entry name" value="GPCR_2_secretin-like"/>
</dbReference>
<dbReference type="InterPro" id="IPR017983">
    <property type="entry name" value="GPCR_2_secretin-like_CS"/>
</dbReference>
<dbReference type="InterPro" id="IPR000203">
    <property type="entry name" value="GPS"/>
</dbReference>
<dbReference type="InterPro" id="IPR001759">
    <property type="entry name" value="Pentraxin-related"/>
</dbReference>
<dbReference type="InterPro" id="IPR035914">
    <property type="entry name" value="Sperma_CUB_dom_sf"/>
</dbReference>
<dbReference type="PANTHER" id="PTHR12011">
    <property type="entry name" value="ADHESION G-PROTEIN COUPLED RECEPTOR"/>
    <property type="match status" value="1"/>
</dbReference>
<dbReference type="PANTHER" id="PTHR12011:SF290">
    <property type="entry name" value="ADHESION G-PROTEIN COUPLED RECEPTOR G6"/>
    <property type="match status" value="1"/>
</dbReference>
<dbReference type="Pfam" id="PF00002">
    <property type="entry name" value="7tm_2"/>
    <property type="match status" value="1"/>
</dbReference>
<dbReference type="Pfam" id="PF00431">
    <property type="entry name" value="CUB"/>
    <property type="match status" value="1"/>
</dbReference>
<dbReference type="Pfam" id="PF01825">
    <property type="entry name" value="GPS"/>
    <property type="match status" value="1"/>
</dbReference>
<dbReference type="Pfam" id="PF00354">
    <property type="entry name" value="Pentaxin"/>
    <property type="match status" value="1"/>
</dbReference>
<dbReference type="Pfam" id="PF25307">
    <property type="entry name" value="SEA_Gpr126"/>
    <property type="match status" value="1"/>
</dbReference>
<dbReference type="PRINTS" id="PR00249">
    <property type="entry name" value="GPCRSECRETIN"/>
</dbReference>
<dbReference type="SMART" id="SM00042">
    <property type="entry name" value="CUB"/>
    <property type="match status" value="1"/>
</dbReference>
<dbReference type="SMART" id="SM00303">
    <property type="entry name" value="GPS"/>
    <property type="match status" value="1"/>
</dbReference>
<dbReference type="SMART" id="SM00159">
    <property type="entry name" value="PTX"/>
    <property type="match status" value="1"/>
</dbReference>
<dbReference type="SUPFAM" id="SSF49899">
    <property type="entry name" value="Concanavalin A-like lectins/glucanases"/>
    <property type="match status" value="1"/>
</dbReference>
<dbReference type="SUPFAM" id="SSF81321">
    <property type="entry name" value="Family A G protein-coupled receptor-like"/>
    <property type="match status" value="1"/>
</dbReference>
<dbReference type="SUPFAM" id="SSF49854">
    <property type="entry name" value="Spermadhesin, CUB domain"/>
    <property type="match status" value="1"/>
</dbReference>
<dbReference type="PROSITE" id="PS01180">
    <property type="entry name" value="CUB"/>
    <property type="match status" value="1"/>
</dbReference>
<dbReference type="PROSITE" id="PS00650">
    <property type="entry name" value="G_PROTEIN_RECEP_F2_2"/>
    <property type="match status" value="1"/>
</dbReference>
<dbReference type="PROSITE" id="PS50261">
    <property type="entry name" value="G_PROTEIN_RECEP_F2_4"/>
    <property type="match status" value="1"/>
</dbReference>
<dbReference type="PROSITE" id="PS50221">
    <property type="entry name" value="GAIN_B"/>
    <property type="match status" value="1"/>
</dbReference>
<dbReference type="PROSITE" id="PS51828">
    <property type="entry name" value="PTX_2"/>
    <property type="match status" value="1"/>
</dbReference>
<evidence type="ECO:0000250" key="1">
    <source>
        <dbReference type="UniProtKB" id="Q6F3F9"/>
    </source>
</evidence>
<evidence type="ECO:0000250" key="2">
    <source>
        <dbReference type="UniProtKB" id="Q86SQ4"/>
    </source>
</evidence>
<evidence type="ECO:0000250" key="3">
    <source>
        <dbReference type="UniProtKB" id="Q8IZF4"/>
    </source>
</evidence>
<evidence type="ECO:0000255" key="4"/>
<evidence type="ECO:0000255" key="5">
    <source>
        <dbReference type="PROSITE-ProRule" id="PRU00059"/>
    </source>
</evidence>
<evidence type="ECO:0000255" key="6">
    <source>
        <dbReference type="PROSITE-ProRule" id="PRU00098"/>
    </source>
</evidence>
<evidence type="ECO:0000255" key="7">
    <source>
        <dbReference type="PROSITE-ProRule" id="PRU01172"/>
    </source>
</evidence>
<evidence type="ECO:0000256" key="8">
    <source>
        <dbReference type="SAM" id="MobiDB-lite"/>
    </source>
</evidence>
<evidence type="ECO:0000269" key="9">
    <source>
    </source>
</evidence>
<evidence type="ECO:0000269" key="10">
    <source>
    </source>
</evidence>
<evidence type="ECO:0000269" key="11">
    <source>
    </source>
</evidence>
<evidence type="ECO:0000269" key="12">
    <source>
    </source>
</evidence>
<evidence type="ECO:0000269" key="13">
    <source>
    </source>
</evidence>
<evidence type="ECO:0000269" key="14">
    <source>
    </source>
</evidence>
<evidence type="ECO:0000269" key="15">
    <source>
    </source>
</evidence>
<evidence type="ECO:0000269" key="16">
    <source>
    </source>
</evidence>
<evidence type="ECO:0000269" key="17">
    <source>
    </source>
</evidence>
<evidence type="ECO:0000303" key="18">
    <source>
    </source>
</evidence>
<evidence type="ECO:0000305" key="19"/>
<evidence type="ECO:0007744" key="20">
    <source>
        <dbReference type="PDB" id="6V55"/>
    </source>
</evidence>
<protein>
    <recommendedName>
        <fullName>Adhesion G-protein coupled receptor G6</fullName>
    </recommendedName>
    <alternativeName>
        <fullName evidence="18">G-protein coupled receptor 126</fullName>
    </alternativeName>
    <component>
        <recommendedName>
            <fullName>Adhesion G-protein coupled receptor G6, N-terminal fragment</fullName>
        </recommendedName>
        <alternativeName>
            <fullName>ADGRG6 N-terminal fragment</fullName>
            <shortName>ADGRG6-NTF</shortName>
        </alternativeName>
    </component>
    <component>
        <recommendedName>
            <fullName>Adhesion G-protein coupled receptor G6, C-terminal fragment</fullName>
        </recommendedName>
        <alternativeName>
            <fullName>ADGRG6 C-terminal fragment</fullName>
            <shortName>ADGRG6-CTF</shortName>
        </alternativeName>
    </component>
</protein>
<gene>
    <name type="primary">adgrg6</name>
    <name evidence="18" type="synonym">gpr126</name>
</gene>
<organism>
    <name type="scientific">Danio rerio</name>
    <name type="common">Zebrafish</name>
    <name type="synonym">Brachydanio rerio</name>
    <dbReference type="NCBI Taxonomy" id="7955"/>
    <lineage>
        <taxon>Eukaryota</taxon>
        <taxon>Metazoa</taxon>
        <taxon>Chordata</taxon>
        <taxon>Craniata</taxon>
        <taxon>Vertebrata</taxon>
        <taxon>Euteleostomi</taxon>
        <taxon>Actinopterygii</taxon>
        <taxon>Neopterygii</taxon>
        <taxon>Teleostei</taxon>
        <taxon>Ostariophysi</taxon>
        <taxon>Cypriniformes</taxon>
        <taxon>Danionidae</taxon>
        <taxon>Danioninae</taxon>
        <taxon>Danio</taxon>
    </lineage>
</organism>
<proteinExistence type="evidence at protein level"/>
<accession>C6KFA3</accession>
<sequence length="1185" mass="130813">MISFISGRWWRWKFQNTLAVFLLLICLSTSVAQSCQSSTSCNVVLTDSQGSFTSPCYPNDYPPSQSCNWTIQAPAGFIVQITFLDFELEEAQGCIYDRVVVKTGTSDAKFCGLTANGLTLNSTGNVMEVFFNSDFSVQKKGFHISYKQVAVTLRNQKVTMPKSSKTILRVSNSISIPVLTAFTVCFEIARTAQKATETIFTLSDAAGTSILAFEKTSNGMELFIGASYCSVDNLLTSSDITATMKPLCLTWTKSSGLIGVYFGGHYFSSICSASQIYTLQSGGLLQIAGKGSSSVSVDDQNLDGFIYNFRLWDHAMLSSELSALTCDTVGNVVDWDHSYWTIPGSSTQTDSTLSCSTAITTLSPGTAGCASGLGCPATLTVTITSIATTNIIPTNATTHEDIFYRSTLVVTDEQTPDRDATAIISQWLNQTFQNWMYRVYVDGISLQLITVLSRITTTRQTYLALLVYKNTTDVNLAEVEIESMLRSAPAIGNGLTLDSVTVNLMENCQADEFPVHYRWPESRPTVTQYVPCFPYKDRNASRTCMINRDNYTSFWALPDRGNCTNITSITVSQENAMDVAVQLADISNNGLSKEELTQVVTKVMELVNIAKINATLASTVVTIISNVMVSSEDAQKDASETALKAVDELVQKIEFDGPSLTISSKNLVVGVSALDTTNFNGSTLSAFIATNTTDPQIDFDSEAHNALAVVTLPPTLLQNLSLSQIEKVSRINFMFFGRTGLFQDHQNNGLTLNSYVVASSVGNFTIKNLQDPVRIEIAHLEYQKDPNPQCVFWDFNLQNYSGGCNSDGCKVGSDSNSNRTVCLCNHLTHFGILMDVSRAAELIDEKNNRVLTFITYIGCGISAIFSAATLLTYIAFEKLRRDYPSKILMNLSTSLLFLNMVFLLDGWLASYEIKELCVTVAVFLHFFLLTSFTWMGLESIHMYIALVKVFNTYIRRYILKFCIVGWGVPAAIVGIVLAVSKDSYGKNYYGKGKDGQGTSEFCWILNPVVFYVTCVAYFSIIFLMNVAMFIVVMIQICGRNGKRSNRTLREDILRNLRSVVSLTFLLGMTWGFAFFAWGPVSLAFMYLFTIFNSLQGLFIFVFHCALKENVQKQWRRYLCCGKLRLADNSDWSKTATNNTKKVSSDNLGKSLSSSSFGSTTANWTSKAKATLNPFARHSNADSTLQ</sequence>
<comment type="function">
    <text evidence="2 9 10 11 13 15 16">Adhesion G-protein coupled receptor (aGPCR) for steroid hormones, such as progesterone and 17alpha-hydroxyprogesterone (17OHP) (By similarity). Ligand binding causes a conformation change that triggers signaling via guanine nucleotide-binding proteins (G proteins) and modulates the activity of downstream effectors, such as adenylate cyclase (By similarity). Adgrg6 is coupled to G(i) G alpha proteins and mediates inhibition of adenylate cyclase (PubMed:25118328). Also able to couple to G(q) G proteins (PubMed:25118328). Involved in myelination of the peripheral nervous system: required for differentiation of promyelinating Schwann cells and for normal myelination of axons (PubMed:19745155, PubMed:23804499, PubMed:25118328, PubMed:25695270, PubMed:31924782). G-protein coupled receptor activity can also be activated by type IV collagen, a major constituent of the basement membrane (PubMed:25118328). Also plays a role inner ear development (PubMed:24067352).</text>
</comment>
<comment type="activity regulation">
    <text evidence="3 6">Forms a heterodimer of 2 chains generated by proteolytic processing that remain associated through non-covalent interactions mediated by the GAIN-B domain (By similarity). In the inactivated receptor, the Stachel sequence (also named stalk) is embedded in the GAIN-B domain, where it adopts a beta-strand conformation (By similarity). On activation, the Stachel moves into the 7 transmembrane region and adopts a twisted hook-shaped configuration that forms contacts within the receptor, leading to coupling of a G-alpha protein, which activates signaling (By similarity). The cleaved GAIN-B and N-terminal domains can then dissociate from the rest of the receptor (By similarity).</text>
</comment>
<comment type="subcellular location">
    <subcellularLocation>
        <location evidence="13">Cell membrane</location>
        <topology evidence="4">Multi-pass membrane protein</topology>
    </subcellularLocation>
</comment>
<comment type="tissue specificity">
    <text evidence="9">Expressed in Schwann cells of the posterior lateral line nerve and in brain.</text>
</comment>
<comment type="developmental stage">
    <text evidence="9">Detected from 30 hours post-fertilization to 4 days post-fertilization in Schwann cells of the posterior lateral line nerve.</text>
</comment>
<comment type="domain">
    <text evidence="3 14">The Stachel sequence (also named stalk) in the C-terminal part of the extracellular domain (ECD) functions as a tethered agonist (PubMed:25533341). In the inactivated receptor, the Stachel sequence (also named stalk) is embedded in the GAIN-B domain, where it adopts a beta-strand conformation. On activation, the Stachel moves into the 7 transmembrane region and adopts a twisted hook-shaped configuration that forms contacts within the receptor, leading to coupling of a G-alpha protein, which activates signaling (By similarity).</text>
</comment>
<comment type="PTM">
    <text evidence="6">Autoproteolytically processed at the GPS region of the GAIN-B domain; this cleavage modulates receptor activity.</text>
</comment>
<comment type="disruption phenotype">
    <text evidence="11 12 17">Morpholino knockdown of the protein results in defects in semicircular canal formation inner ear (PubMed:24067352, PubMed:24082093). Mutants fishes display unaffected heart development (PubMed:34767447).</text>
</comment>
<comment type="similarity">
    <text evidence="19">Belongs to the G-protein coupled receptor 2 family. Adhesion G-protein coupled receptor (ADGR) subfamily.</text>
</comment>